<dbReference type="EC" id="7.1.1.2"/>
<dbReference type="EMBL" id="D16387">
    <property type="protein sequence ID" value="BAA03881.1"/>
    <property type="status" value="ALT_SEQ"/>
    <property type="molecule type" value="Genomic_DNA"/>
</dbReference>
<dbReference type="PIR" id="S70598">
    <property type="entry name" value="S70598"/>
</dbReference>
<dbReference type="RefSeq" id="NP_008169.1">
    <property type="nucleotide sequence ID" value="NC_001627.1"/>
</dbReference>
<dbReference type="SMR" id="Q33821"/>
<dbReference type="GeneID" id="807828"/>
<dbReference type="CTD" id="4539"/>
<dbReference type="GO" id="GO:0031966">
    <property type="term" value="C:mitochondrial membrane"/>
    <property type="evidence" value="ECO:0007669"/>
    <property type="project" value="UniProtKB-SubCell"/>
</dbReference>
<dbReference type="GO" id="GO:0030964">
    <property type="term" value="C:NADH dehydrogenase complex"/>
    <property type="evidence" value="ECO:0007669"/>
    <property type="project" value="TreeGrafter"/>
</dbReference>
<dbReference type="GO" id="GO:0008137">
    <property type="term" value="F:NADH dehydrogenase (ubiquinone) activity"/>
    <property type="evidence" value="ECO:0007669"/>
    <property type="project" value="UniProtKB-EC"/>
</dbReference>
<dbReference type="GO" id="GO:0042773">
    <property type="term" value="P:ATP synthesis coupled electron transport"/>
    <property type="evidence" value="ECO:0007669"/>
    <property type="project" value="InterPro"/>
</dbReference>
<dbReference type="Gene3D" id="1.10.287.3510">
    <property type="match status" value="1"/>
</dbReference>
<dbReference type="InterPro" id="IPR001133">
    <property type="entry name" value="NADH_UbQ_OxRdtase_chain4L/K"/>
</dbReference>
<dbReference type="InterPro" id="IPR039428">
    <property type="entry name" value="NUOK/Mnh_C1-like"/>
</dbReference>
<dbReference type="PANTHER" id="PTHR11434:SF0">
    <property type="entry name" value="NADH-UBIQUINONE OXIDOREDUCTASE CHAIN 4L"/>
    <property type="match status" value="1"/>
</dbReference>
<dbReference type="PANTHER" id="PTHR11434">
    <property type="entry name" value="NADH-UBIQUINONE OXIDOREDUCTASE SUBUNIT ND4L"/>
    <property type="match status" value="1"/>
</dbReference>
<dbReference type="Pfam" id="PF00420">
    <property type="entry name" value="Oxidored_q2"/>
    <property type="match status" value="1"/>
</dbReference>
<evidence type="ECO:0000250" key="1"/>
<evidence type="ECO:0000255" key="2"/>
<evidence type="ECO:0000305" key="3"/>
<sequence length="98" mass="10765">MTSTFIITITIFYLGLLGILINRLHFLSILLCLELLLISLFLSLTVWAINANTTFLLTNNLILLTLSACEASAGLSLMVALSRTHNSDLVSTINILQQ</sequence>
<feature type="chain" id="PRO_0000118392" description="NADH-ubiquinone oxidoreductase chain 4L">
    <location>
        <begin position="1"/>
        <end position="98"/>
    </location>
</feature>
<feature type="transmembrane region" description="Helical" evidence="2">
    <location>
        <begin position="1"/>
        <end position="21"/>
    </location>
</feature>
<feature type="transmembrane region" description="Helical" evidence="2">
    <location>
        <begin position="29"/>
        <end position="49"/>
    </location>
</feature>
<feature type="transmembrane region" description="Helical" evidence="2">
    <location>
        <begin position="61"/>
        <end position="81"/>
    </location>
</feature>
<accession>Q33821</accession>
<proteinExistence type="inferred from homology"/>
<organism>
    <name type="scientific">Patiria pectinifera</name>
    <name type="common">Starfish</name>
    <name type="synonym">Asterina pectinifera</name>
    <dbReference type="NCBI Taxonomy" id="7594"/>
    <lineage>
        <taxon>Eukaryota</taxon>
        <taxon>Metazoa</taxon>
        <taxon>Echinodermata</taxon>
        <taxon>Eleutherozoa</taxon>
        <taxon>Asterozoa</taxon>
        <taxon>Asteroidea</taxon>
        <taxon>Valvatacea</taxon>
        <taxon>Valvatida</taxon>
        <taxon>Asterinidae</taxon>
        <taxon>Patiria</taxon>
    </lineage>
</organism>
<protein>
    <recommendedName>
        <fullName>NADH-ubiquinone oxidoreductase chain 4L</fullName>
        <ecNumber>7.1.1.2</ecNumber>
    </recommendedName>
    <alternativeName>
        <fullName>NADH dehydrogenase subunit 4L</fullName>
    </alternativeName>
</protein>
<geneLocation type="mitochondrion"/>
<comment type="function">
    <text evidence="1">Core subunit of the mitochondrial membrane respiratory chain NADH dehydrogenase (Complex I) that is believed to belong to the minimal assembly required for catalysis. Complex I functions in the transfer of electrons from NADH to the respiratory chain. The immediate electron acceptor for the enzyme is believed to be ubiquinone (By similarity).</text>
</comment>
<comment type="catalytic activity">
    <reaction>
        <text>a ubiquinone + NADH + 5 H(+)(in) = a ubiquinol + NAD(+) + 4 H(+)(out)</text>
        <dbReference type="Rhea" id="RHEA:29091"/>
        <dbReference type="Rhea" id="RHEA-COMP:9565"/>
        <dbReference type="Rhea" id="RHEA-COMP:9566"/>
        <dbReference type="ChEBI" id="CHEBI:15378"/>
        <dbReference type="ChEBI" id="CHEBI:16389"/>
        <dbReference type="ChEBI" id="CHEBI:17976"/>
        <dbReference type="ChEBI" id="CHEBI:57540"/>
        <dbReference type="ChEBI" id="CHEBI:57945"/>
        <dbReference type="EC" id="7.1.1.2"/>
    </reaction>
</comment>
<comment type="subcellular location">
    <subcellularLocation>
        <location evidence="1">Mitochondrion membrane</location>
        <topology evidence="1">Multi-pass membrane protein</topology>
    </subcellularLocation>
</comment>
<comment type="similarity">
    <text evidence="3">Belongs to the complex I subunit 4L family.</text>
</comment>
<keyword id="KW-0249">Electron transport</keyword>
<keyword id="KW-0472">Membrane</keyword>
<keyword id="KW-0496">Mitochondrion</keyword>
<keyword id="KW-0520">NAD</keyword>
<keyword id="KW-0679">Respiratory chain</keyword>
<keyword id="KW-1278">Translocase</keyword>
<keyword id="KW-0812">Transmembrane</keyword>
<keyword id="KW-1133">Transmembrane helix</keyword>
<keyword id="KW-0813">Transport</keyword>
<keyword id="KW-0830">Ubiquinone</keyword>
<reference key="1">
    <citation type="journal article" date="1995" name="Genetics">
        <title>Nucleotide sequence and gene organization of the starfish Asterina pectinifera mitochondrial genome.</title>
        <authorList>
            <person name="Asakawa S."/>
            <person name="Himeno H."/>
            <person name="Miura K."/>
            <person name="Watanabe K."/>
        </authorList>
    </citation>
    <scope>NUCLEOTIDE SEQUENCE [GENOMIC DNA]</scope>
    <source>
        <tissue>Ovary</tissue>
    </source>
</reference>
<name>NU4LM_PATPE</name>
<gene>
    <name type="primary">ND4L</name>
</gene>